<dbReference type="EC" id="1.23.1.-" evidence="2"/>
<dbReference type="EMBL" id="KC244282">
    <property type="protein sequence ID" value="AGG40646.1"/>
    <property type="molecule type" value="mRNA"/>
</dbReference>
<dbReference type="SMR" id="M1T9X3"/>
<dbReference type="OMA" id="MIWEDEP"/>
<dbReference type="BRENDA" id="1.3.1.45">
    <property type="organism ID" value="2435"/>
</dbReference>
<dbReference type="GO" id="GO:0050664">
    <property type="term" value="F:oxidoreductase activity, acting on NAD(P)H, oxygen as acceptor"/>
    <property type="evidence" value="ECO:0000314"/>
    <property type="project" value="UniProtKB"/>
</dbReference>
<dbReference type="GO" id="GO:0009807">
    <property type="term" value="P:lignan biosynthetic process"/>
    <property type="evidence" value="ECO:0000314"/>
    <property type="project" value="UniProtKB"/>
</dbReference>
<dbReference type="CDD" id="cd05259">
    <property type="entry name" value="PCBER_SDR_a"/>
    <property type="match status" value="1"/>
</dbReference>
<dbReference type="Gene3D" id="3.40.50.720">
    <property type="entry name" value="NAD(P)-binding Rossmann-like Domain"/>
    <property type="match status" value="1"/>
</dbReference>
<dbReference type="Gene3D" id="3.90.25.10">
    <property type="entry name" value="UDP-galactose 4-epimerase, domain 1"/>
    <property type="match status" value="1"/>
</dbReference>
<dbReference type="InterPro" id="IPR036291">
    <property type="entry name" value="NAD(P)-bd_dom_sf"/>
</dbReference>
<dbReference type="InterPro" id="IPR008030">
    <property type="entry name" value="NmrA-like"/>
</dbReference>
<dbReference type="InterPro" id="IPR050608">
    <property type="entry name" value="NmrA-type/Isoflavone_red_sf"/>
</dbReference>
<dbReference type="InterPro" id="IPR045312">
    <property type="entry name" value="PCBER-like"/>
</dbReference>
<dbReference type="PANTHER" id="PTHR43349:SF93">
    <property type="entry name" value="ISOFLAVONE REDUCTASE HOMOLOG P3-RELATED"/>
    <property type="match status" value="1"/>
</dbReference>
<dbReference type="PANTHER" id="PTHR43349">
    <property type="entry name" value="PINORESINOL REDUCTASE-RELATED"/>
    <property type="match status" value="1"/>
</dbReference>
<dbReference type="Pfam" id="PF05368">
    <property type="entry name" value="NmrA"/>
    <property type="match status" value="1"/>
</dbReference>
<dbReference type="SUPFAM" id="SSF51735">
    <property type="entry name" value="NAD(P)-binding Rossmann-fold domains"/>
    <property type="match status" value="1"/>
</dbReference>
<sequence length="306" mass="33286">MGKSRILIIGATGYIGRQVAKASAALGHPTLILVRETTASNPEKAQLLESFKSSGITIVHGSLEDHASLVEAIKKVDVVISTVGGAQIADQLNIIKAIKEVGTIKRFLPTEFGNDVDKTSAVEPAKGLFALKVKIRRAIEAEGIPYTYVSSNCFAGYFLPNLGQPGLTAPPRDKIVIFGDGNAKAVFVKEEDIGTFTIKSVDDPRTLNKTLYLRLPANTFSFNELVALWEKKIGKTLEKVYVPEEQVLKTIAETPFPGNIIISIAHSIFVKGDQTNFEIGDNGVEGSELYPDVKYTTVDEYLNQFV</sequence>
<name>IRL1_GINBI</name>
<comment type="function">
    <text evidence="2">Oxidoreductase involved in lignan biosynthesis. Catalyzes the NADPH-dependent reduction of phenylcoumaran benzylic ethers. Converts dehydrodiconiferyl alcohol (DDC) to isodihydrodehydrodiconiferyl alcohol (IDDDC), and dihydrodehydrodiconiferyl alcohol (DDDC) to tetrahydrodehydrodiconiferyl alcohol (TDDC). May regulate changes in lignin content and accumulation of flavonoids.</text>
</comment>
<comment type="catalytic activity">
    <reaction evidence="2">
        <text>(-)-dehydrodiconiferyl alcohol + NADPH + H(+) = (S)-isodihydrodehydrodiconiferyl alcohol + NADP(+)</text>
        <dbReference type="Rhea" id="RHEA:59440"/>
        <dbReference type="ChEBI" id="CHEBI:15378"/>
        <dbReference type="ChEBI" id="CHEBI:57783"/>
        <dbReference type="ChEBI" id="CHEBI:58349"/>
        <dbReference type="ChEBI" id="CHEBI:70467"/>
        <dbReference type="ChEBI" id="CHEBI:143259"/>
    </reaction>
</comment>
<comment type="catalytic activity">
    <reaction evidence="2">
        <text>(+)-dehydrodiconiferyl alcohol + NADPH + H(+) = (R)-isodihydrodehydrodiconiferyl alcohol + NADP(+)</text>
        <dbReference type="Rhea" id="RHEA:59844"/>
        <dbReference type="ChEBI" id="CHEBI:15378"/>
        <dbReference type="ChEBI" id="CHEBI:57783"/>
        <dbReference type="ChEBI" id="CHEBI:58349"/>
        <dbReference type="ChEBI" id="CHEBI:143256"/>
        <dbReference type="ChEBI" id="CHEBI:143260"/>
    </reaction>
</comment>
<comment type="catalytic activity">
    <reaction evidence="2">
        <text>(2R,3S)-dihydrodehydrodiconiferyl alcohol + NADPH + H(+) = (S)-tetrahydrodehydrodiconiferyl alcohol + NADP(+)</text>
        <dbReference type="Rhea" id="RHEA:59848"/>
        <dbReference type="ChEBI" id="CHEBI:15378"/>
        <dbReference type="ChEBI" id="CHEBI:57783"/>
        <dbReference type="ChEBI" id="CHEBI:58349"/>
        <dbReference type="ChEBI" id="CHEBI:143258"/>
        <dbReference type="ChEBI" id="CHEBI:143262"/>
    </reaction>
</comment>
<comment type="catalytic activity">
    <reaction evidence="2">
        <text>(2S,3R)-dihydrodehydrodiconiferyl alcohol + NADPH + H(+) = (R)-tetrahydrodehydrodiconiferyl alcohol + NADP(+)</text>
        <dbReference type="Rhea" id="RHEA:59852"/>
        <dbReference type="ChEBI" id="CHEBI:15378"/>
        <dbReference type="ChEBI" id="CHEBI:57783"/>
        <dbReference type="ChEBI" id="CHEBI:58349"/>
        <dbReference type="ChEBI" id="CHEBI:143257"/>
        <dbReference type="ChEBI" id="CHEBI:143263"/>
    </reaction>
</comment>
<comment type="tissue specificity">
    <text evidence="2">Highly expressed in sclerotesta. Expressed in roots, and two-to-four year stems.</text>
</comment>
<comment type="induction">
    <text evidence="2">Induced by UV-B, wounding, salicylate, ethephon, 5-aminolevulinic acid and abscisic acid (ABA).</text>
</comment>
<comment type="similarity">
    <text evidence="4">Belongs to the NmrA-type oxidoreductase family. Isoflavone reductase subfamily.</text>
</comment>
<reference key="1">
    <citation type="journal article" date="2013" name="Plant Cell Rep.">
        <title>Expression patterns of an isoflavone reductase-like gene and its possible roles in secondary metabolism in Ginkgo biloba.</title>
        <authorList>
            <person name="Hua C."/>
            <person name="Linling L."/>
            <person name="Feng X."/>
            <person name="Yan W."/>
            <person name="Honghui Y."/>
            <person name="Conghua W."/>
            <person name="Shaobing W."/>
            <person name="Zhiqin L."/>
            <person name="Juan H."/>
            <person name="Yuping W."/>
            <person name="Shuiyuan C."/>
            <person name="Fuliang C."/>
        </authorList>
    </citation>
    <scope>NUCLEOTIDE SEQUENCE [MRNA]</scope>
    <scope>FUNCTION</scope>
    <scope>CATALYTIC ACTIVITY</scope>
    <scope>TISSUE SPECIFICITY</scope>
    <scope>INDUCTION</scope>
</reference>
<accession>M1T9X3</accession>
<feature type="chain" id="PRO_0000442618" description="Phenylcoumaran benzylic ether reductase IRL1">
    <location>
        <begin position="1"/>
        <end position="306"/>
    </location>
</feature>
<feature type="active site" description="Proton acceptor" evidence="1">
    <location>
        <position position="132"/>
    </location>
</feature>
<feature type="binding site" evidence="1">
    <location>
        <begin position="10"/>
        <end position="16"/>
    </location>
    <ligand>
        <name>NADP(+)</name>
        <dbReference type="ChEBI" id="CHEBI:58349"/>
    </ligand>
</feature>
<feature type="binding site" evidence="1">
    <location>
        <position position="35"/>
    </location>
    <ligand>
        <name>NADP(+)</name>
        <dbReference type="ChEBI" id="CHEBI:58349"/>
    </ligand>
</feature>
<feature type="binding site" evidence="1">
    <location>
        <position position="44"/>
    </location>
    <ligand>
        <name>NADP(+)</name>
        <dbReference type="ChEBI" id="CHEBI:58349"/>
    </ligand>
</feature>
<feature type="binding site" evidence="1">
    <location>
        <position position="136"/>
    </location>
    <ligand>
        <name>NADP(+)</name>
        <dbReference type="ChEBI" id="CHEBI:58349"/>
    </ligand>
</feature>
<keyword id="KW-0521">NADP</keyword>
<keyword id="KW-0560">Oxidoreductase</keyword>
<gene>
    <name evidence="3" type="primary">IRL1</name>
</gene>
<proteinExistence type="evidence at protein level"/>
<organism>
    <name type="scientific">Ginkgo biloba</name>
    <name type="common">Ginkgo</name>
    <name type="synonym">Maidenhair tree</name>
    <dbReference type="NCBI Taxonomy" id="3311"/>
    <lineage>
        <taxon>Eukaryota</taxon>
        <taxon>Viridiplantae</taxon>
        <taxon>Streptophyta</taxon>
        <taxon>Embryophyta</taxon>
        <taxon>Tracheophyta</taxon>
        <taxon>Spermatophyta</taxon>
        <taxon>Ginkgoidae</taxon>
        <taxon>Ginkgoales</taxon>
        <taxon>Ginkgoaceae</taxon>
        <taxon>Ginkgo</taxon>
    </lineage>
</organism>
<protein>
    <recommendedName>
        <fullName evidence="4">Phenylcoumaran benzylic ether reductase IRL1</fullName>
        <ecNumber evidence="2">1.23.1.-</ecNumber>
    </recommendedName>
    <alternativeName>
        <fullName evidence="3">Isoflavone reductase-like 1</fullName>
        <shortName evidence="3">GbIRL1</shortName>
        <shortName evidence="3">IFR-like protein 1</shortName>
    </alternativeName>
</protein>
<evidence type="ECO:0000250" key="1">
    <source>
        <dbReference type="UniProtKB" id="Q9LD14"/>
    </source>
</evidence>
<evidence type="ECO:0000269" key="2">
    <source>
    </source>
</evidence>
<evidence type="ECO:0000303" key="3">
    <source>
    </source>
</evidence>
<evidence type="ECO:0000305" key="4"/>